<name>TM104_HUMAN</name>
<reference key="1">
    <citation type="journal article" date="2004" name="Nat. Genet.">
        <title>Complete sequencing and characterization of 21,243 full-length human cDNAs.</title>
        <authorList>
            <person name="Ota T."/>
            <person name="Suzuki Y."/>
            <person name="Nishikawa T."/>
            <person name="Otsuki T."/>
            <person name="Sugiyama T."/>
            <person name="Irie R."/>
            <person name="Wakamatsu A."/>
            <person name="Hayashi K."/>
            <person name="Sato H."/>
            <person name="Nagai K."/>
            <person name="Kimura K."/>
            <person name="Makita H."/>
            <person name="Sekine M."/>
            <person name="Obayashi M."/>
            <person name="Nishi T."/>
            <person name="Shibahara T."/>
            <person name="Tanaka T."/>
            <person name="Ishii S."/>
            <person name="Yamamoto J."/>
            <person name="Saito K."/>
            <person name="Kawai Y."/>
            <person name="Isono Y."/>
            <person name="Nakamura Y."/>
            <person name="Nagahari K."/>
            <person name="Murakami K."/>
            <person name="Yasuda T."/>
            <person name="Iwayanagi T."/>
            <person name="Wagatsuma M."/>
            <person name="Shiratori A."/>
            <person name="Sudo H."/>
            <person name="Hosoiri T."/>
            <person name="Kaku Y."/>
            <person name="Kodaira H."/>
            <person name="Kondo H."/>
            <person name="Sugawara M."/>
            <person name="Takahashi M."/>
            <person name="Kanda K."/>
            <person name="Yokoi T."/>
            <person name="Furuya T."/>
            <person name="Kikkawa E."/>
            <person name="Omura Y."/>
            <person name="Abe K."/>
            <person name="Kamihara K."/>
            <person name="Katsuta N."/>
            <person name="Sato K."/>
            <person name="Tanikawa M."/>
            <person name="Yamazaki M."/>
            <person name="Ninomiya K."/>
            <person name="Ishibashi T."/>
            <person name="Yamashita H."/>
            <person name="Murakawa K."/>
            <person name="Fujimori K."/>
            <person name="Tanai H."/>
            <person name="Kimata M."/>
            <person name="Watanabe M."/>
            <person name="Hiraoka S."/>
            <person name="Chiba Y."/>
            <person name="Ishida S."/>
            <person name="Ono Y."/>
            <person name="Takiguchi S."/>
            <person name="Watanabe S."/>
            <person name="Yosida M."/>
            <person name="Hotuta T."/>
            <person name="Kusano J."/>
            <person name="Kanehori K."/>
            <person name="Takahashi-Fujii A."/>
            <person name="Hara H."/>
            <person name="Tanase T.-O."/>
            <person name="Nomura Y."/>
            <person name="Togiya S."/>
            <person name="Komai F."/>
            <person name="Hara R."/>
            <person name="Takeuchi K."/>
            <person name="Arita M."/>
            <person name="Imose N."/>
            <person name="Musashino K."/>
            <person name="Yuuki H."/>
            <person name="Oshima A."/>
            <person name="Sasaki N."/>
            <person name="Aotsuka S."/>
            <person name="Yoshikawa Y."/>
            <person name="Matsunawa H."/>
            <person name="Ichihara T."/>
            <person name="Shiohata N."/>
            <person name="Sano S."/>
            <person name="Moriya S."/>
            <person name="Momiyama H."/>
            <person name="Satoh N."/>
            <person name="Takami S."/>
            <person name="Terashima Y."/>
            <person name="Suzuki O."/>
            <person name="Nakagawa S."/>
            <person name="Senoh A."/>
            <person name="Mizoguchi H."/>
            <person name="Goto Y."/>
            <person name="Shimizu F."/>
            <person name="Wakebe H."/>
            <person name="Hishigaki H."/>
            <person name="Watanabe T."/>
            <person name="Sugiyama A."/>
            <person name="Takemoto M."/>
            <person name="Kawakami B."/>
            <person name="Yamazaki M."/>
            <person name="Watanabe K."/>
            <person name="Kumagai A."/>
            <person name="Itakura S."/>
            <person name="Fukuzumi Y."/>
            <person name="Fujimori Y."/>
            <person name="Komiyama M."/>
            <person name="Tashiro H."/>
            <person name="Tanigami A."/>
            <person name="Fujiwara T."/>
            <person name="Ono T."/>
            <person name="Yamada K."/>
            <person name="Fujii Y."/>
            <person name="Ozaki K."/>
            <person name="Hirao M."/>
            <person name="Ohmori Y."/>
            <person name="Kawabata A."/>
            <person name="Hikiji T."/>
            <person name="Kobatake N."/>
            <person name="Inagaki H."/>
            <person name="Ikema Y."/>
            <person name="Okamoto S."/>
            <person name="Okitani R."/>
            <person name="Kawakami T."/>
            <person name="Noguchi S."/>
            <person name="Itoh T."/>
            <person name="Shigeta K."/>
            <person name="Senba T."/>
            <person name="Matsumura K."/>
            <person name="Nakajima Y."/>
            <person name="Mizuno T."/>
            <person name="Morinaga M."/>
            <person name="Sasaki M."/>
            <person name="Togashi T."/>
            <person name="Oyama M."/>
            <person name="Hata H."/>
            <person name="Watanabe M."/>
            <person name="Komatsu T."/>
            <person name="Mizushima-Sugano J."/>
            <person name="Satoh T."/>
            <person name="Shirai Y."/>
            <person name="Takahashi Y."/>
            <person name="Nakagawa K."/>
            <person name="Okumura K."/>
            <person name="Nagase T."/>
            <person name="Nomura N."/>
            <person name="Kikuchi H."/>
            <person name="Masuho Y."/>
            <person name="Yamashita R."/>
            <person name="Nakai K."/>
            <person name="Yada T."/>
            <person name="Nakamura Y."/>
            <person name="Ohara O."/>
            <person name="Isogai T."/>
            <person name="Sugano S."/>
        </authorList>
    </citation>
    <scope>NUCLEOTIDE SEQUENCE [LARGE SCALE MRNA] (ISOFORMS 1 AND 2)</scope>
    <scope>VARIANT MET-58</scope>
    <source>
        <tissue>Colon mucosa</tissue>
        <tissue>Spleen</tissue>
    </source>
</reference>
<reference key="2">
    <citation type="journal article" date="2004" name="Genome Res.">
        <title>The status, quality, and expansion of the NIH full-length cDNA project: the Mammalian Gene Collection (MGC).</title>
        <authorList>
            <consortium name="The MGC Project Team"/>
        </authorList>
    </citation>
    <scope>NUCLEOTIDE SEQUENCE [LARGE SCALE MRNA] (ISOFORM 1)</scope>
    <scope>VARIANT MET-58</scope>
    <source>
        <tissue>Testis</tissue>
    </source>
</reference>
<reference key="3">
    <citation type="journal article" date="2007" name="BMC Genomics">
        <title>The full-ORF clone resource of the German cDNA consortium.</title>
        <authorList>
            <person name="Bechtel S."/>
            <person name="Rosenfelder H."/>
            <person name="Duda A."/>
            <person name="Schmidt C.P."/>
            <person name="Ernst U."/>
            <person name="Wellenreuther R."/>
            <person name="Mehrle A."/>
            <person name="Schuster C."/>
            <person name="Bahr A."/>
            <person name="Bloecker H."/>
            <person name="Heubner D."/>
            <person name="Hoerlein A."/>
            <person name="Michel G."/>
            <person name="Wedler H."/>
            <person name="Koehrer K."/>
            <person name="Ottenwaelder B."/>
            <person name="Poustka A."/>
            <person name="Wiemann S."/>
            <person name="Schupp I."/>
        </authorList>
    </citation>
    <scope>NUCLEOTIDE SEQUENCE [LARGE SCALE MRNA] OF 243-496 (ISOFORM 1)</scope>
    <source>
        <tissue>Testis</tissue>
    </source>
</reference>
<reference key="4">
    <citation type="journal article" date="2006" name="Cell">
        <title>Global, in vivo, and site-specific phosphorylation dynamics in signaling networks.</title>
        <authorList>
            <person name="Olsen J.V."/>
            <person name="Blagoev B."/>
            <person name="Gnad F."/>
            <person name="Macek B."/>
            <person name="Kumar C."/>
            <person name="Mortensen P."/>
            <person name="Mann M."/>
        </authorList>
    </citation>
    <scope>IDENTIFICATION BY MASS SPECTROMETRY [LARGE SCALE ANALYSIS]</scope>
    <source>
        <tissue>Cervix carcinoma</tissue>
    </source>
</reference>
<reference key="5">
    <citation type="journal article" date="2011" name="Sci. Signal.">
        <title>System-wide temporal characterization of the proteome and phosphoproteome of human embryonic stem cell differentiation.</title>
        <authorList>
            <person name="Rigbolt K.T."/>
            <person name="Prokhorova T.A."/>
            <person name="Akimov V."/>
            <person name="Henningsen J."/>
            <person name="Johansen P.T."/>
            <person name="Kratchmarova I."/>
            <person name="Kassem M."/>
            <person name="Mann M."/>
            <person name="Olsen J.V."/>
            <person name="Blagoev B."/>
        </authorList>
    </citation>
    <scope>IDENTIFICATION BY MASS SPECTROMETRY [LARGE SCALE ANALYSIS]</scope>
</reference>
<feature type="chain" id="PRO_0000254178" description="Transmembrane protein 104">
    <location>
        <begin position="1"/>
        <end position="496"/>
    </location>
</feature>
<feature type="topological domain" description="Cytoplasmic" evidence="1">
    <location>
        <begin position="1"/>
        <end position="10"/>
    </location>
</feature>
<feature type="transmembrane region" description="Helical" evidence="1">
    <location>
        <begin position="11"/>
        <end position="31"/>
    </location>
</feature>
<feature type="topological domain" description="Extracellular" evidence="1">
    <location>
        <begin position="32"/>
        <end position="36"/>
    </location>
</feature>
<feature type="transmembrane region" description="Helical" evidence="1">
    <location>
        <begin position="37"/>
        <end position="57"/>
    </location>
</feature>
<feature type="topological domain" description="Cytoplasmic" evidence="1">
    <location>
        <begin position="58"/>
        <end position="146"/>
    </location>
</feature>
<feature type="transmembrane region" description="Helical" evidence="1">
    <location>
        <begin position="147"/>
        <end position="167"/>
    </location>
</feature>
<feature type="topological domain" description="Extracellular" evidence="1">
    <location>
        <begin position="168"/>
        <end position="204"/>
    </location>
</feature>
<feature type="transmembrane region" description="Helical" evidence="1">
    <location>
        <begin position="205"/>
        <end position="225"/>
    </location>
</feature>
<feature type="topological domain" description="Cytoplasmic" evidence="1">
    <location>
        <begin position="226"/>
        <end position="233"/>
    </location>
</feature>
<feature type="transmembrane region" description="Helical" evidence="1">
    <location>
        <begin position="234"/>
        <end position="254"/>
    </location>
</feature>
<feature type="topological domain" description="Extracellular" evidence="1">
    <location>
        <begin position="255"/>
        <end position="276"/>
    </location>
</feature>
<feature type="transmembrane region" description="Helical" evidence="1">
    <location>
        <begin position="277"/>
        <end position="297"/>
    </location>
</feature>
<feature type="topological domain" description="Cytoplasmic" evidence="1">
    <location>
        <begin position="298"/>
        <end position="306"/>
    </location>
</feature>
<feature type="transmembrane region" description="Helical" evidence="1">
    <location>
        <begin position="307"/>
        <end position="327"/>
    </location>
</feature>
<feature type="topological domain" description="Extracellular" evidence="1">
    <location>
        <begin position="328"/>
        <end position="354"/>
    </location>
</feature>
<feature type="transmembrane region" description="Helical" evidence="1">
    <location>
        <begin position="355"/>
        <end position="375"/>
    </location>
</feature>
<feature type="topological domain" description="Cytoplasmic" evidence="1">
    <location>
        <begin position="376"/>
        <end position="397"/>
    </location>
</feature>
<feature type="transmembrane region" description="Helical" evidence="1">
    <location>
        <begin position="398"/>
        <end position="418"/>
    </location>
</feature>
<feature type="topological domain" description="Extracellular" evidence="1">
    <location>
        <begin position="419"/>
        <end position="421"/>
    </location>
</feature>
<feature type="transmembrane region" description="Helical" evidence="1">
    <location>
        <begin position="422"/>
        <end position="442"/>
    </location>
</feature>
<feature type="topological domain" description="Cytoplasmic" evidence="1">
    <location>
        <begin position="443"/>
        <end position="470"/>
    </location>
</feature>
<feature type="transmembrane region" description="Helical" evidence="1">
    <location>
        <begin position="471"/>
        <end position="491"/>
    </location>
</feature>
<feature type="topological domain" description="Extracellular" evidence="1">
    <location>
        <begin position="492"/>
        <end position="496"/>
    </location>
</feature>
<feature type="glycosylation site" description="N-linked (GlcNAc...) asparagine" evidence="1">
    <location>
        <position position="193"/>
    </location>
</feature>
<feature type="splice variant" id="VSP_021199" description="In isoform 2." evidence="4">
    <original>AFAVMIVLALIRIGHGQGEGHPPLADFSGVRNLFGVCVYSFMCQHSLPSLITPVSSKRHLTRLVFLDYVLI</original>
    <variation>DGPPGSVMGRAEEDASPAWPRSRCRCGGKLKLNSLYPTSATCMAPDAPGAGQVKVGVNFLCLPPHRSTRPT</variation>
    <location>
        <begin position="244"/>
        <end position="314"/>
    </location>
</feature>
<feature type="splice variant" id="VSP_021200" description="In isoform 2." evidence="4">
    <location>
        <begin position="315"/>
        <end position="496"/>
    </location>
</feature>
<feature type="sequence variant" id="VAR_028831" description="In dbSNP:rs2016126." evidence="2 3">
    <original>V</original>
    <variation>M</variation>
    <location>
        <position position="58"/>
    </location>
</feature>
<feature type="sequence variant" id="VAR_028832" description="In dbSNP:rs3803784.">
    <original>A</original>
    <variation>T</variation>
    <location>
        <position position="439"/>
    </location>
</feature>
<sequence>MAGEITETGELYSSYVGLVYMFNLIVGTGALTMPKAFATAGWLVSLVLLVFLGFMSFVTTTFVIEAMAAANAQLHWKRMENLKEEEDDDSSTASDSDVLIRDNYERAEKRPILSVQRRGSPNPFEITDRVEMGQMASMFFNKVGVNLFYFCIIVYLYGDLAIYAAAVPFSLMQVTCSATGNDSCGVEADTKYNDTDRCWGPLRRVDAYRIYLAIFTLLLGPFTFFDVQKTKYLQILTSLMRWIAFAVMIVLALIRIGHGQGEGHPPLADFSGVRNLFGVCVYSFMCQHSLPSLITPVSSKRHLTRLVFLDYVLILAFYGLLSFTAIFCFRGDSLMDMYTLNFARCDVVGLAAVRFFLGLFPVFTISTNFPIIAVTLRNNWKTLFHREGGTYPWVVDRVVFPTITLVPPVLVAFCTHDLESLVGITGAYAGTGIQYVIPAFLVYHCRRDTQLAFGCGVSNKHRSPFRHTFWVGFVLLWAFSCFIFVTANIILSETKL</sequence>
<dbReference type="EMBL" id="AK000262">
    <property type="protein sequence ID" value="BAA91039.1"/>
    <property type="molecule type" value="mRNA"/>
</dbReference>
<dbReference type="EMBL" id="AK074029">
    <property type="protein sequence ID" value="BAB84855.1"/>
    <property type="status" value="ALT_INIT"/>
    <property type="molecule type" value="mRNA"/>
</dbReference>
<dbReference type="EMBL" id="BC037278">
    <property type="protein sequence ID" value="AAH37278.1"/>
    <property type="molecule type" value="mRNA"/>
</dbReference>
<dbReference type="EMBL" id="AL137521">
    <property type="protein sequence ID" value="CAB70787.1"/>
    <property type="molecule type" value="mRNA"/>
</dbReference>
<dbReference type="CCDS" id="CCDS32723.1">
    <molecule id="Q8NE00-1"/>
</dbReference>
<dbReference type="CCDS" id="CCDS82201.1">
    <molecule id="Q8NE00-2"/>
</dbReference>
<dbReference type="PIR" id="T46367">
    <property type="entry name" value="T46367"/>
</dbReference>
<dbReference type="RefSeq" id="NP_001308193.1">
    <molecule id="Q8NE00-2"/>
    <property type="nucleotide sequence ID" value="NM_001321264.3"/>
</dbReference>
<dbReference type="RefSeq" id="NP_060198.3">
    <molecule id="Q8NE00-1"/>
    <property type="nucleotide sequence ID" value="NM_017728.3"/>
</dbReference>
<dbReference type="BioGRID" id="120217">
    <property type="interactions" value="7"/>
</dbReference>
<dbReference type="FunCoup" id="Q8NE00">
    <property type="interactions" value="118"/>
</dbReference>
<dbReference type="IntAct" id="Q8NE00">
    <property type="interactions" value="5"/>
</dbReference>
<dbReference type="STRING" id="9606.ENSP00000334849"/>
<dbReference type="TCDB" id="2.A.18.10.1">
    <property type="family name" value="the amino acid/auxin permease (aaap) family"/>
</dbReference>
<dbReference type="GlyCosmos" id="Q8NE00">
    <property type="glycosylation" value="1 site, No reported glycans"/>
</dbReference>
<dbReference type="GlyGen" id="Q8NE00">
    <property type="glycosylation" value="1 site"/>
</dbReference>
<dbReference type="iPTMnet" id="Q8NE00"/>
<dbReference type="PhosphoSitePlus" id="Q8NE00"/>
<dbReference type="BioMuta" id="TMEM104"/>
<dbReference type="DMDM" id="117949798"/>
<dbReference type="jPOST" id="Q8NE00"/>
<dbReference type="MassIVE" id="Q8NE00"/>
<dbReference type="PaxDb" id="9606-ENSP00000334849"/>
<dbReference type="PeptideAtlas" id="Q8NE00"/>
<dbReference type="ProteomicsDB" id="73106">
    <molecule id="Q8NE00-1"/>
</dbReference>
<dbReference type="ProteomicsDB" id="73107">
    <molecule id="Q8NE00-2"/>
</dbReference>
<dbReference type="Pumba" id="Q8NE00"/>
<dbReference type="Antibodypedia" id="32018">
    <property type="antibodies" value="27 antibodies from 13 providers"/>
</dbReference>
<dbReference type="DNASU" id="54868"/>
<dbReference type="Ensembl" id="ENST00000335464.10">
    <molecule id="Q8NE00-1"/>
    <property type="protein sequence ID" value="ENSP00000334849.5"/>
    <property type="gene ID" value="ENSG00000109066.14"/>
</dbReference>
<dbReference type="Ensembl" id="ENST00000582330.2">
    <molecule id="Q8NE00-1"/>
    <property type="protein sequence ID" value="ENSP00000461922.1"/>
    <property type="gene ID" value="ENSG00000109066.14"/>
</dbReference>
<dbReference type="Ensembl" id="ENST00000582773.5">
    <molecule id="Q8NE00-2"/>
    <property type="protein sequence ID" value="ENSP00000463205.1"/>
    <property type="gene ID" value="ENSG00000109066.14"/>
</dbReference>
<dbReference type="GeneID" id="54868"/>
<dbReference type="KEGG" id="hsa:54868"/>
<dbReference type="MANE-Select" id="ENST00000335464.10">
    <property type="protein sequence ID" value="ENSP00000334849.5"/>
    <property type="RefSeq nucleotide sequence ID" value="NM_017728.4"/>
    <property type="RefSeq protein sequence ID" value="NP_060198.3"/>
</dbReference>
<dbReference type="UCSC" id="uc002jls.5">
    <molecule id="Q8NE00-1"/>
    <property type="organism name" value="human"/>
</dbReference>
<dbReference type="AGR" id="HGNC:25984"/>
<dbReference type="CTD" id="54868"/>
<dbReference type="GeneCards" id="TMEM104"/>
<dbReference type="HGNC" id="HGNC:25984">
    <property type="gene designation" value="TMEM104"/>
</dbReference>
<dbReference type="HPA" id="ENSG00000109066">
    <property type="expression patterns" value="Low tissue specificity"/>
</dbReference>
<dbReference type="neXtProt" id="NX_Q8NE00"/>
<dbReference type="OpenTargets" id="ENSG00000109066"/>
<dbReference type="PharmGKB" id="PA142670753"/>
<dbReference type="VEuPathDB" id="HostDB:ENSG00000109066"/>
<dbReference type="eggNOG" id="KOG3832">
    <property type="taxonomic scope" value="Eukaryota"/>
</dbReference>
<dbReference type="GeneTree" id="ENSGT00390000001244"/>
<dbReference type="HOGENOM" id="CLU_025541_4_0_1"/>
<dbReference type="InParanoid" id="Q8NE00"/>
<dbReference type="OMA" id="GHREGHP"/>
<dbReference type="OrthoDB" id="294541at2759"/>
<dbReference type="PAN-GO" id="Q8NE00">
    <property type="GO annotations" value="0 GO annotations based on evolutionary models"/>
</dbReference>
<dbReference type="PhylomeDB" id="Q8NE00"/>
<dbReference type="TreeFam" id="TF314030"/>
<dbReference type="PathwayCommons" id="Q8NE00"/>
<dbReference type="SignaLink" id="Q8NE00"/>
<dbReference type="BioGRID-ORCS" id="54868">
    <property type="hits" value="14 hits in 1162 CRISPR screens"/>
</dbReference>
<dbReference type="ChiTaRS" id="TMEM104">
    <property type="organism name" value="human"/>
</dbReference>
<dbReference type="GenomeRNAi" id="54868"/>
<dbReference type="Pharos" id="Q8NE00">
    <property type="development level" value="Tdark"/>
</dbReference>
<dbReference type="PRO" id="PR:Q8NE00"/>
<dbReference type="Proteomes" id="UP000005640">
    <property type="component" value="Chromosome 17"/>
</dbReference>
<dbReference type="RNAct" id="Q8NE00">
    <property type="molecule type" value="protein"/>
</dbReference>
<dbReference type="Bgee" id="ENSG00000109066">
    <property type="expression patterns" value="Expressed in stromal cell of endometrium and 130 other cell types or tissues"/>
</dbReference>
<dbReference type="ExpressionAtlas" id="Q8NE00">
    <property type="expression patterns" value="baseline and differential"/>
</dbReference>
<dbReference type="GO" id="GO:0016020">
    <property type="term" value="C:membrane"/>
    <property type="evidence" value="ECO:0007669"/>
    <property type="project" value="UniProtKB-SubCell"/>
</dbReference>
<dbReference type="Gene3D" id="1.20.1740.10">
    <property type="entry name" value="Amino acid/polyamine transporter I"/>
    <property type="match status" value="1"/>
</dbReference>
<dbReference type="InterPro" id="IPR013057">
    <property type="entry name" value="AA_transpt_TM"/>
</dbReference>
<dbReference type="PANTHER" id="PTHR16189:SF0">
    <property type="entry name" value="TRANSMEMBRANE PROTEIN 104"/>
    <property type="match status" value="1"/>
</dbReference>
<dbReference type="PANTHER" id="PTHR16189">
    <property type="entry name" value="TRANSMEMBRANE PROTEIN 104-RELATED"/>
    <property type="match status" value="1"/>
</dbReference>
<dbReference type="Pfam" id="PF01490">
    <property type="entry name" value="Aa_trans"/>
    <property type="match status" value="2"/>
</dbReference>
<protein>
    <recommendedName>
        <fullName>Transmembrane protein 104</fullName>
    </recommendedName>
</protein>
<proteinExistence type="evidence at protein level"/>
<keyword id="KW-0025">Alternative splicing</keyword>
<keyword id="KW-0325">Glycoprotein</keyword>
<keyword id="KW-0472">Membrane</keyword>
<keyword id="KW-1267">Proteomics identification</keyword>
<keyword id="KW-1185">Reference proteome</keyword>
<keyword id="KW-0812">Transmembrane</keyword>
<keyword id="KW-1133">Transmembrane helix</keyword>
<organism>
    <name type="scientific">Homo sapiens</name>
    <name type="common">Human</name>
    <dbReference type="NCBI Taxonomy" id="9606"/>
    <lineage>
        <taxon>Eukaryota</taxon>
        <taxon>Metazoa</taxon>
        <taxon>Chordata</taxon>
        <taxon>Craniata</taxon>
        <taxon>Vertebrata</taxon>
        <taxon>Euteleostomi</taxon>
        <taxon>Mammalia</taxon>
        <taxon>Eutheria</taxon>
        <taxon>Euarchontoglires</taxon>
        <taxon>Primates</taxon>
        <taxon>Haplorrhini</taxon>
        <taxon>Catarrhini</taxon>
        <taxon>Hominidae</taxon>
        <taxon>Homo</taxon>
    </lineage>
</organism>
<gene>
    <name type="primary">TMEM104</name>
</gene>
<comment type="subcellular location">
    <subcellularLocation>
        <location evidence="5">Membrane</location>
        <topology evidence="5">Multi-pass membrane protein</topology>
    </subcellularLocation>
</comment>
<comment type="alternative products">
    <event type="alternative splicing"/>
    <isoform>
        <id>Q8NE00-1</id>
        <name>1</name>
        <sequence type="displayed"/>
    </isoform>
    <isoform>
        <id>Q8NE00-2</id>
        <name>2</name>
        <sequence type="described" ref="VSP_021199 VSP_021200"/>
    </isoform>
</comment>
<comment type="similarity">
    <text evidence="5">Belongs to the TMEM104 family.</text>
</comment>
<comment type="sequence caution" evidence="5">
    <conflict type="erroneous initiation">
        <sequence resource="EMBL-CDS" id="BAB84855"/>
    </conflict>
</comment>
<accession>Q8NE00</accession>
<accession>Q8TEU1</accession>
<accession>Q9NT56</accession>
<accession>Q9NXH1</accession>
<evidence type="ECO:0000255" key="1"/>
<evidence type="ECO:0000269" key="2">
    <source>
    </source>
</evidence>
<evidence type="ECO:0000269" key="3">
    <source>
    </source>
</evidence>
<evidence type="ECO:0000303" key="4">
    <source>
    </source>
</evidence>
<evidence type="ECO:0000305" key="5"/>